<organism>
    <name type="scientific">Bacteroides thetaiotaomicron (strain ATCC 29148 / DSM 2079 / JCM 5827 / CCUG 10774 / NCTC 10582 / VPI-5482 / E50)</name>
    <dbReference type="NCBI Taxonomy" id="226186"/>
    <lineage>
        <taxon>Bacteria</taxon>
        <taxon>Pseudomonadati</taxon>
        <taxon>Bacteroidota</taxon>
        <taxon>Bacteroidia</taxon>
        <taxon>Bacteroidales</taxon>
        <taxon>Bacteroidaceae</taxon>
        <taxon>Bacteroides</taxon>
    </lineage>
</organism>
<comment type="similarity">
    <text evidence="1">Belongs to the UPF0597 family.</text>
</comment>
<reference key="1">
    <citation type="journal article" date="2003" name="Science">
        <title>A genomic view of the human-Bacteroides thetaiotaomicron symbiosis.</title>
        <authorList>
            <person name="Xu J."/>
            <person name="Bjursell M.K."/>
            <person name="Himrod J."/>
            <person name="Deng S."/>
            <person name="Carmichael L.K."/>
            <person name="Chiang H.C."/>
            <person name="Hooper L.V."/>
            <person name="Gordon J.I."/>
        </authorList>
    </citation>
    <scope>NUCLEOTIDE SEQUENCE [LARGE SCALE GENOMIC DNA]</scope>
    <source>
        <strain>ATCC 29148 / DSM 2079 / JCM 5827 / CCUG 10774 / NCTC 10582 / VPI-5482 / E50</strain>
    </source>
</reference>
<accession>Q8A606</accession>
<evidence type="ECO:0000255" key="1">
    <source>
        <dbReference type="HAMAP-Rule" id="MF_01845"/>
    </source>
</evidence>
<protein>
    <recommendedName>
        <fullName evidence="1">UPF0597 protein BT_2080</fullName>
    </recommendedName>
</protein>
<proteinExistence type="inferred from homology"/>
<feature type="chain" id="PRO_0000339787" description="UPF0597 protein BT_2080">
    <location>
        <begin position="1"/>
        <end position="429"/>
    </location>
</feature>
<keyword id="KW-1185">Reference proteome</keyword>
<sequence length="429" mass="45914">MIESERKQIIDLIKKEVIPAIGCTEPIAVALCVAKAAETLGMKPEKIEVLLSANILKNAMGVGIPGTDMVGLPIAVALGALIGRSEYQLEVLRDCTPEAVEQGKLFIAEKRICISLKEDITEKLYIEVICTAGSQKATAVIAGGHTTFVYIATDEKVLLDKQQTANEEEEDASLELNLRKVYDFALTSPLDEIRFILDTARLNKAAAEQAFKGNYGHSLGKMLRGTYEHKVMGDSVFSHILSYTSAACDARMAGAMIPVMSNSGSGNQGISATLPVVVFAEENGKTEEELIRALMLSHLTVIYIKQSLGRLSALCGCVVAATGSSCGITWLMGGNYNQVAFAVQNMIANLTGMICDGAKPSCALKVTTGVSTAVLSAMMAMEDRCVTSVEGIIDEDVDQSIRNLTRIGSQAMNETDKMVLDIMTHKGGC</sequence>
<name>Y2080_BACTN</name>
<gene>
    <name type="ordered locus">BT_2080</name>
</gene>
<dbReference type="EMBL" id="AE015928">
    <property type="protein sequence ID" value="AAO77187.1"/>
    <property type="molecule type" value="Genomic_DNA"/>
</dbReference>
<dbReference type="RefSeq" id="NP_810993.1">
    <property type="nucleotide sequence ID" value="NC_004663.1"/>
</dbReference>
<dbReference type="RefSeq" id="WP_008766478.1">
    <property type="nucleotide sequence ID" value="NC_004663.1"/>
</dbReference>
<dbReference type="SMR" id="Q8A606"/>
<dbReference type="FunCoup" id="Q8A606">
    <property type="interactions" value="41"/>
</dbReference>
<dbReference type="STRING" id="226186.BT_2080"/>
<dbReference type="PaxDb" id="226186-BT_2080"/>
<dbReference type="EnsemblBacteria" id="AAO77187">
    <property type="protein sequence ID" value="AAO77187"/>
    <property type="gene ID" value="BT_2080"/>
</dbReference>
<dbReference type="GeneID" id="60928069"/>
<dbReference type="KEGG" id="bth:BT_2080"/>
<dbReference type="PATRIC" id="fig|226186.12.peg.2141"/>
<dbReference type="eggNOG" id="COG3681">
    <property type="taxonomic scope" value="Bacteria"/>
</dbReference>
<dbReference type="HOGENOM" id="CLU_051840_0_0_10"/>
<dbReference type="InParanoid" id="Q8A606"/>
<dbReference type="OrthoDB" id="41906at2"/>
<dbReference type="Proteomes" id="UP000001414">
    <property type="component" value="Chromosome"/>
</dbReference>
<dbReference type="GO" id="GO:0080146">
    <property type="term" value="F:L-cysteine desulfhydrase activity"/>
    <property type="evidence" value="ECO:0000318"/>
    <property type="project" value="GO_Central"/>
</dbReference>
<dbReference type="GO" id="GO:0019450">
    <property type="term" value="P:L-cysteine catabolic process to pyruvate"/>
    <property type="evidence" value="ECO:0000318"/>
    <property type="project" value="GO_Central"/>
</dbReference>
<dbReference type="HAMAP" id="MF_01845">
    <property type="entry name" value="UPF0597"/>
    <property type="match status" value="1"/>
</dbReference>
<dbReference type="InterPro" id="IPR005130">
    <property type="entry name" value="Ser_deHydtase-like_asu"/>
</dbReference>
<dbReference type="InterPro" id="IPR021144">
    <property type="entry name" value="UPF0597"/>
</dbReference>
<dbReference type="PANTHER" id="PTHR30501">
    <property type="entry name" value="UPF0597 PROTEIN YHAM"/>
    <property type="match status" value="1"/>
</dbReference>
<dbReference type="PANTHER" id="PTHR30501:SF2">
    <property type="entry name" value="UPF0597 PROTEIN YHAM"/>
    <property type="match status" value="1"/>
</dbReference>
<dbReference type="Pfam" id="PF03313">
    <property type="entry name" value="SDH_alpha"/>
    <property type="match status" value="1"/>
</dbReference>
<dbReference type="PIRSF" id="PIRSF006054">
    <property type="entry name" value="UCP006054"/>
    <property type="match status" value="1"/>
</dbReference>